<organism>
    <name type="scientific">Oryctolagus cuniculus</name>
    <name type="common">Rabbit</name>
    <dbReference type="NCBI Taxonomy" id="9986"/>
    <lineage>
        <taxon>Eukaryota</taxon>
        <taxon>Metazoa</taxon>
        <taxon>Chordata</taxon>
        <taxon>Craniata</taxon>
        <taxon>Vertebrata</taxon>
        <taxon>Euteleostomi</taxon>
        <taxon>Mammalia</taxon>
        <taxon>Eutheria</taxon>
        <taxon>Euarchontoglires</taxon>
        <taxon>Glires</taxon>
        <taxon>Lagomorpha</taxon>
        <taxon>Leporidae</taxon>
        <taxon>Oryctolagus</taxon>
    </lineage>
</organism>
<protein>
    <recommendedName>
        <fullName>Ig kappa chain V region 12F2</fullName>
    </recommendedName>
</protein>
<keyword id="KW-1064">Adaptive immunity</keyword>
<keyword id="KW-1015">Disulfide bond</keyword>
<keyword id="KW-0374">Hybridoma</keyword>
<keyword id="KW-0391">Immunity</keyword>
<keyword id="KW-1280">Immunoglobulin</keyword>
<keyword id="KW-0502">Monoclonal antibody</keyword>
<keyword id="KW-1185">Reference proteome</keyword>
<keyword id="KW-0732">Signal</keyword>
<accession>P01691</accession>
<name>KV10_RABIT</name>
<dbReference type="EMBL" id="K01358">
    <property type="protein sequence ID" value="AAB59259.1"/>
    <property type="status" value="ALT_TERM"/>
    <property type="molecule type" value="mRNA"/>
</dbReference>
<dbReference type="PIR" id="A01954">
    <property type="entry name" value="K4RBF2"/>
</dbReference>
<dbReference type="SMR" id="P01691"/>
<dbReference type="FunCoup" id="P01691">
    <property type="interactions" value="277"/>
</dbReference>
<dbReference type="PaxDb" id="9986-ENSOCUP00000024818"/>
<dbReference type="eggNOG" id="ENOG502S3KF">
    <property type="taxonomic scope" value="Eukaryota"/>
</dbReference>
<dbReference type="InParanoid" id="P01691"/>
<dbReference type="Proteomes" id="UP000001811">
    <property type="component" value="Unplaced"/>
</dbReference>
<dbReference type="GO" id="GO:0019814">
    <property type="term" value="C:immunoglobulin complex"/>
    <property type="evidence" value="ECO:0007669"/>
    <property type="project" value="UniProtKB-KW"/>
</dbReference>
<dbReference type="GO" id="GO:0003823">
    <property type="term" value="F:antigen binding"/>
    <property type="evidence" value="ECO:0007669"/>
    <property type="project" value="UniProtKB-KW"/>
</dbReference>
<dbReference type="GO" id="GO:0002250">
    <property type="term" value="P:adaptive immune response"/>
    <property type="evidence" value="ECO:0007669"/>
    <property type="project" value="UniProtKB-KW"/>
</dbReference>
<dbReference type="FunFam" id="2.60.40.10:FF:000212">
    <property type="entry name" value="Immunoglobulin kappa chain variable 12-38"/>
    <property type="match status" value="1"/>
</dbReference>
<dbReference type="Gene3D" id="2.60.40.10">
    <property type="entry name" value="Immunoglobulins"/>
    <property type="match status" value="1"/>
</dbReference>
<dbReference type="InterPro" id="IPR007110">
    <property type="entry name" value="Ig-like_dom"/>
</dbReference>
<dbReference type="InterPro" id="IPR036179">
    <property type="entry name" value="Ig-like_dom_sf"/>
</dbReference>
<dbReference type="InterPro" id="IPR013783">
    <property type="entry name" value="Ig-like_fold"/>
</dbReference>
<dbReference type="InterPro" id="IPR003599">
    <property type="entry name" value="Ig_sub"/>
</dbReference>
<dbReference type="InterPro" id="IPR013106">
    <property type="entry name" value="Ig_V-set"/>
</dbReference>
<dbReference type="InterPro" id="IPR050150">
    <property type="entry name" value="IgV_Light_Chain"/>
</dbReference>
<dbReference type="PANTHER" id="PTHR23267">
    <property type="entry name" value="IMMUNOGLOBULIN LIGHT CHAIN"/>
    <property type="match status" value="1"/>
</dbReference>
<dbReference type="Pfam" id="PF07686">
    <property type="entry name" value="V-set"/>
    <property type="match status" value="1"/>
</dbReference>
<dbReference type="SMART" id="SM00409">
    <property type="entry name" value="IG"/>
    <property type="match status" value="1"/>
</dbReference>
<dbReference type="SMART" id="SM00406">
    <property type="entry name" value="IGv"/>
    <property type="match status" value="1"/>
</dbReference>
<dbReference type="SUPFAM" id="SSF48726">
    <property type="entry name" value="Immunoglobulin"/>
    <property type="match status" value="1"/>
</dbReference>
<dbReference type="PROSITE" id="PS50835">
    <property type="entry name" value="IG_LIKE"/>
    <property type="match status" value="1"/>
</dbReference>
<comment type="miscellaneous">
    <text>This clone was derived from the rabbit-mouse hybridoma 12F2; the chain produced is a monoclonal antibody against streptococcal group C vaccine.</text>
</comment>
<feature type="signal peptide">
    <location>
        <begin position="1" status="less than"/>
        <end position="6"/>
    </location>
</feature>
<feature type="chain" id="PRO_0000015167" description="Ig kappa chain V region 12F2">
    <location>
        <begin position="7"/>
        <end position="117"/>
    </location>
</feature>
<feature type="region of interest" description="Framework-1">
    <location>
        <begin position="7"/>
        <end position="29"/>
    </location>
</feature>
<feature type="region of interest" description="Complementarity-determining-1">
    <location>
        <begin position="30"/>
        <end position="40"/>
    </location>
</feature>
<feature type="region of interest" description="Framework-2">
    <location>
        <begin position="41"/>
        <end position="55"/>
    </location>
</feature>
<feature type="region of interest" description="Complementarity-determining-2">
    <location>
        <begin position="56"/>
        <end position="62"/>
    </location>
</feature>
<feature type="region of interest" description="Framework-3">
    <location>
        <begin position="63"/>
        <end position="94"/>
    </location>
</feature>
<feature type="region of interest" description="Complementarity-determining-3">
    <location>
        <begin position="95"/>
        <end position="106"/>
    </location>
</feature>
<feature type="region of interest" description="Framework-4">
    <location>
        <begin position="107"/>
        <end position="116"/>
    </location>
</feature>
<feature type="disulfide bond" evidence="1">
    <location>
        <begin position="29"/>
        <end position="86"/>
    </location>
</feature>
<feature type="non-terminal residue">
    <location>
        <position position="1"/>
    </location>
</feature>
<feature type="non-terminal residue">
    <location>
        <position position="117"/>
    </location>
</feature>
<proteinExistence type="evidence at transcript level"/>
<sequence length="117" mass="12288">LPGARCAYDMTQTPASVEVAVGGTVTIKCQASQSISTYLSWYQQKPGQRPKLLIYRASTLASGVSSRFKGSGSGTEFTLTISGVECADAATYYCQQGWSSSNVENVFGGGTEVVVKG</sequence>
<evidence type="ECO:0000255" key="1">
    <source>
        <dbReference type="PROSITE-ProRule" id="PRU00114"/>
    </source>
</evidence>
<reference key="1">
    <citation type="journal article" date="1983" name="Proc. Natl. Acad. Sci. U.S.A.">
        <title>cDNA clone encoding a complete rabbit immunoglobulin kappa light chain of b4 allotype.</title>
        <authorList>
            <person name="Dreher K.L."/>
            <person name="Emorine L."/>
            <person name="Kindt T.J."/>
            <person name="Max E.E."/>
        </authorList>
    </citation>
    <scope>NUCLEOTIDE SEQUENCE [MRNA]</scope>
</reference>